<gene>
    <name evidence="1" type="primary">fluC2</name>
    <name evidence="1" type="synonym">crcB2</name>
    <name type="ordered locus">SAB1642</name>
</gene>
<proteinExistence type="inferred from homology"/>
<feature type="chain" id="PRO_0000252942" description="Fluoride-specific ion channel FluC 2">
    <location>
        <begin position="1"/>
        <end position="117"/>
    </location>
</feature>
<feature type="transmembrane region" description="Helical" evidence="1">
    <location>
        <begin position="1"/>
        <end position="21"/>
    </location>
</feature>
<feature type="transmembrane region" description="Helical" evidence="1">
    <location>
        <begin position="46"/>
        <end position="66"/>
    </location>
</feature>
<feature type="transmembrane region" description="Helical" evidence="1">
    <location>
        <begin position="95"/>
        <end position="115"/>
    </location>
</feature>
<feature type="binding site" evidence="1">
    <location>
        <position position="71"/>
    </location>
    <ligand>
        <name>Na(+)</name>
        <dbReference type="ChEBI" id="CHEBI:29101"/>
        <note>structural</note>
    </ligand>
</feature>
<feature type="binding site" evidence="1">
    <location>
        <position position="74"/>
    </location>
    <ligand>
        <name>Na(+)</name>
        <dbReference type="ChEBI" id="CHEBI:29101"/>
        <note>structural</note>
    </ligand>
</feature>
<organism>
    <name type="scientific">Staphylococcus aureus (strain bovine RF122 / ET3-1)</name>
    <dbReference type="NCBI Taxonomy" id="273036"/>
    <lineage>
        <taxon>Bacteria</taxon>
        <taxon>Bacillati</taxon>
        <taxon>Bacillota</taxon>
        <taxon>Bacilli</taxon>
        <taxon>Bacillales</taxon>
        <taxon>Staphylococcaceae</taxon>
        <taxon>Staphylococcus</taxon>
    </lineage>
</organism>
<comment type="function">
    <text evidence="1">Fluoride-specific ion channel. Important for reducing fluoride concentration in the cell, thus reducing its toxicity.</text>
</comment>
<comment type="catalytic activity">
    <reaction evidence="1">
        <text>fluoride(in) = fluoride(out)</text>
        <dbReference type="Rhea" id="RHEA:76159"/>
        <dbReference type="ChEBI" id="CHEBI:17051"/>
    </reaction>
    <physiologicalReaction direction="left-to-right" evidence="1">
        <dbReference type="Rhea" id="RHEA:76160"/>
    </physiologicalReaction>
</comment>
<comment type="activity regulation">
    <text evidence="1">Na(+) is not transported, but it plays an essential structural role and its presence is essential for fluoride channel function.</text>
</comment>
<comment type="subcellular location">
    <subcellularLocation>
        <location evidence="1">Cell membrane</location>
        <topology evidence="1">Multi-pass membrane protein</topology>
    </subcellularLocation>
</comment>
<comment type="similarity">
    <text evidence="1">Belongs to the fluoride channel Fluc/FEX (TC 1.A.43) family.</text>
</comment>
<accession>Q2YTK4</accession>
<evidence type="ECO:0000255" key="1">
    <source>
        <dbReference type="HAMAP-Rule" id="MF_00454"/>
    </source>
</evidence>
<sequence length="117" mass="12796">MISIILVMIGGGFGAIARSAITDYFNHKFTSKLPIATLIVNLVGSFLIGLTIGLSISISWFPAFFVTGFLGGLTTFSTLAKELTLMMTPKFNINLFLNYSLLQFIIGFIACYIGYHI</sequence>
<keyword id="KW-1003">Cell membrane</keyword>
<keyword id="KW-0407">Ion channel</keyword>
<keyword id="KW-0406">Ion transport</keyword>
<keyword id="KW-0472">Membrane</keyword>
<keyword id="KW-0479">Metal-binding</keyword>
<keyword id="KW-0915">Sodium</keyword>
<keyword id="KW-0812">Transmembrane</keyword>
<keyword id="KW-1133">Transmembrane helix</keyword>
<keyword id="KW-0813">Transport</keyword>
<name>FLUC2_STAAB</name>
<dbReference type="EMBL" id="AJ938182">
    <property type="protein sequence ID" value="CAI81331.1"/>
    <property type="molecule type" value="Genomic_DNA"/>
</dbReference>
<dbReference type="RefSeq" id="WP_000623471.1">
    <property type="nucleotide sequence ID" value="NC_007622.1"/>
</dbReference>
<dbReference type="SMR" id="Q2YTK4"/>
<dbReference type="KEGG" id="sab:SAB1642"/>
<dbReference type="HOGENOM" id="CLU_114342_2_3_9"/>
<dbReference type="GO" id="GO:0005886">
    <property type="term" value="C:plasma membrane"/>
    <property type="evidence" value="ECO:0007669"/>
    <property type="project" value="UniProtKB-SubCell"/>
</dbReference>
<dbReference type="GO" id="GO:0062054">
    <property type="term" value="F:fluoride channel activity"/>
    <property type="evidence" value="ECO:0007669"/>
    <property type="project" value="UniProtKB-UniRule"/>
</dbReference>
<dbReference type="GO" id="GO:0046872">
    <property type="term" value="F:metal ion binding"/>
    <property type="evidence" value="ECO:0007669"/>
    <property type="project" value="UniProtKB-KW"/>
</dbReference>
<dbReference type="GO" id="GO:0140114">
    <property type="term" value="P:cellular detoxification of fluoride"/>
    <property type="evidence" value="ECO:0007669"/>
    <property type="project" value="UniProtKB-UniRule"/>
</dbReference>
<dbReference type="HAMAP" id="MF_00454">
    <property type="entry name" value="FluC"/>
    <property type="match status" value="1"/>
</dbReference>
<dbReference type="InterPro" id="IPR003691">
    <property type="entry name" value="FluC"/>
</dbReference>
<dbReference type="PANTHER" id="PTHR28259">
    <property type="entry name" value="FLUORIDE EXPORT PROTEIN 1-RELATED"/>
    <property type="match status" value="1"/>
</dbReference>
<dbReference type="PANTHER" id="PTHR28259:SF16">
    <property type="entry name" value="FLUORIDE-SPECIFIC ION CHANNEL FLUC 2"/>
    <property type="match status" value="1"/>
</dbReference>
<dbReference type="Pfam" id="PF02537">
    <property type="entry name" value="CRCB"/>
    <property type="match status" value="1"/>
</dbReference>
<reference key="1">
    <citation type="journal article" date="2007" name="PLoS ONE">
        <title>Molecular correlates of host specialization in Staphylococcus aureus.</title>
        <authorList>
            <person name="Herron-Olson L."/>
            <person name="Fitzgerald J.R."/>
            <person name="Musser J.M."/>
            <person name="Kapur V."/>
        </authorList>
    </citation>
    <scope>NUCLEOTIDE SEQUENCE [LARGE SCALE GENOMIC DNA]</scope>
    <source>
        <strain>bovine RF122 / ET3-1</strain>
    </source>
</reference>
<protein>
    <recommendedName>
        <fullName evidence="1">Fluoride-specific ion channel FluC 2</fullName>
    </recommendedName>
</protein>